<feature type="chain" id="PRO_0000212603" description="Metal transporter Nramp6">
    <location>
        <begin position="1"/>
        <end position="527"/>
    </location>
</feature>
<feature type="transmembrane region" description="Helical" evidence="1">
    <location>
        <begin position="38"/>
        <end position="58"/>
    </location>
</feature>
<feature type="transmembrane region" description="Helical" evidence="1">
    <location>
        <begin position="71"/>
        <end position="91"/>
    </location>
</feature>
<feature type="transmembrane region" description="Helical" evidence="1">
    <location>
        <begin position="115"/>
        <end position="135"/>
    </location>
</feature>
<feature type="transmembrane region" description="Helical" evidence="1">
    <location>
        <begin position="143"/>
        <end position="163"/>
    </location>
</feature>
<feature type="transmembrane region" description="Helical" evidence="1">
    <location>
        <begin position="173"/>
        <end position="193"/>
    </location>
</feature>
<feature type="transmembrane region" description="Helical" evidence="1">
    <location>
        <begin position="221"/>
        <end position="241"/>
    </location>
</feature>
<feature type="transmembrane region" description="Helical" evidence="1">
    <location>
        <begin position="264"/>
        <end position="284"/>
    </location>
</feature>
<feature type="transmembrane region" description="Helical" evidence="1">
    <location>
        <begin position="321"/>
        <end position="341"/>
    </location>
</feature>
<feature type="transmembrane region" description="Helical" evidence="1">
    <location>
        <begin position="364"/>
        <end position="384"/>
    </location>
</feature>
<feature type="transmembrane region" description="Helical" evidence="1">
    <location>
        <begin position="385"/>
        <end position="405"/>
    </location>
</feature>
<feature type="transmembrane region" description="Helical" evidence="1">
    <location>
        <begin position="427"/>
        <end position="447"/>
    </location>
</feature>
<feature type="transmembrane region" description="Helical" evidence="1">
    <location>
        <begin position="458"/>
        <end position="478"/>
    </location>
</feature>
<feature type="splice variant" id="VSP_040700" description="In isoform 2." evidence="3">
    <original>IRKLEFLIAFL</original>
    <variation>VHLLSFVYYGF</variation>
    <location>
        <begin position="170"/>
        <end position="180"/>
    </location>
</feature>
<feature type="splice variant" id="VSP_040701" description="In isoform 2." evidence="3">
    <location>
        <begin position="181"/>
        <end position="527"/>
    </location>
</feature>
<name>NRAM6_ARATH</name>
<comment type="function">
    <text evidence="2">Probable intracellular cadmium (Cd) transporter that participates in the distribution or availability of Cd within the cell.</text>
</comment>
<comment type="subcellular location">
    <subcellularLocation>
        <location evidence="5">Endomembrane system</location>
        <topology evidence="5">Multi-pass membrane protein</topology>
    </subcellularLocation>
</comment>
<comment type="alternative products">
    <event type="alternative splicing"/>
    <isoform>
        <id>Q9S9N8-1</id>
        <name>1</name>
        <name>Nramp6a</name>
        <sequence type="displayed"/>
    </isoform>
    <isoform>
        <id>Q9S9N8-2</id>
        <name>2</name>
        <name>Nramp6b</name>
        <sequence type="described" ref="VSP_040700 VSP_040701"/>
    </isoform>
</comment>
<comment type="tissue specificity">
    <text evidence="2">Expressed in the vascular bundles of shoots, cotyledons, young leaves, sepals and petals, at the top of the flower stem and in the style. Expressed in the peduncle of developing siliques as well as in the septum and the funiculi.</text>
</comment>
<comment type="disruption phenotype">
    <text evidence="2">No visible phenotype under normal growth condition, but in presence of Cd, increased tolerance to Cd toxicity.</text>
</comment>
<comment type="similarity">
    <text evidence="4">Belongs to the NRAMP (TC 2.A.55) family.</text>
</comment>
<comment type="sequence caution" evidence="4">
    <conflict type="erroneous gene model prediction">
        <sequence resource="EMBL-CDS" id="AAF18493"/>
    </conflict>
</comment>
<accession>Q9S9N8</accession>
<accession>Q84N36</accession>
<accession>Q9C5V8</accession>
<reference key="1">
    <citation type="submission" date="2001-01" db="EMBL/GenBank/DDBJ databases">
        <title>Identification of Nramp6, a putative heavy metal transporter in Arabidopsis thaliana.</title>
        <authorList>
            <person name="Pittman J.K."/>
            <person name="Hall J.L."/>
            <person name="Williams L.E."/>
        </authorList>
    </citation>
    <scope>NUCLEOTIDE SEQUENCE [MRNA] (ISOFORMS 1 AND 2)</scope>
    <source>
        <strain>cv. Landsberg erecta</strain>
    </source>
</reference>
<reference key="2">
    <citation type="journal article" date="2000" name="Nature">
        <title>Sequence and analysis of chromosome 1 of the plant Arabidopsis thaliana.</title>
        <authorList>
            <person name="Theologis A."/>
            <person name="Ecker J.R."/>
            <person name="Palm C.J."/>
            <person name="Federspiel N.A."/>
            <person name="Kaul S."/>
            <person name="White O."/>
            <person name="Alonso J."/>
            <person name="Altafi H."/>
            <person name="Araujo R."/>
            <person name="Bowman C.L."/>
            <person name="Brooks S.Y."/>
            <person name="Buehler E."/>
            <person name="Chan A."/>
            <person name="Chao Q."/>
            <person name="Chen H."/>
            <person name="Cheuk R.F."/>
            <person name="Chin C.W."/>
            <person name="Chung M.K."/>
            <person name="Conn L."/>
            <person name="Conway A.B."/>
            <person name="Conway A.R."/>
            <person name="Creasy T.H."/>
            <person name="Dewar K."/>
            <person name="Dunn P."/>
            <person name="Etgu P."/>
            <person name="Feldblyum T.V."/>
            <person name="Feng J.-D."/>
            <person name="Fong B."/>
            <person name="Fujii C.Y."/>
            <person name="Gill J.E."/>
            <person name="Goldsmith A.D."/>
            <person name="Haas B."/>
            <person name="Hansen N.F."/>
            <person name="Hughes B."/>
            <person name="Huizar L."/>
            <person name="Hunter J.L."/>
            <person name="Jenkins J."/>
            <person name="Johnson-Hopson C."/>
            <person name="Khan S."/>
            <person name="Khaykin E."/>
            <person name="Kim C.J."/>
            <person name="Koo H.L."/>
            <person name="Kremenetskaia I."/>
            <person name="Kurtz D.B."/>
            <person name="Kwan A."/>
            <person name="Lam B."/>
            <person name="Langin-Hooper S."/>
            <person name="Lee A."/>
            <person name="Lee J.M."/>
            <person name="Lenz C.A."/>
            <person name="Li J.H."/>
            <person name="Li Y.-P."/>
            <person name="Lin X."/>
            <person name="Liu S.X."/>
            <person name="Liu Z.A."/>
            <person name="Luros J.S."/>
            <person name="Maiti R."/>
            <person name="Marziali A."/>
            <person name="Militscher J."/>
            <person name="Miranda M."/>
            <person name="Nguyen M."/>
            <person name="Nierman W.C."/>
            <person name="Osborne B.I."/>
            <person name="Pai G."/>
            <person name="Peterson J."/>
            <person name="Pham P.K."/>
            <person name="Rizzo M."/>
            <person name="Rooney T."/>
            <person name="Rowley D."/>
            <person name="Sakano H."/>
            <person name="Salzberg S.L."/>
            <person name="Schwartz J.R."/>
            <person name="Shinn P."/>
            <person name="Southwick A.M."/>
            <person name="Sun H."/>
            <person name="Tallon L.J."/>
            <person name="Tambunga G."/>
            <person name="Toriumi M.J."/>
            <person name="Town C.D."/>
            <person name="Utterback T."/>
            <person name="Van Aken S."/>
            <person name="Vaysberg M."/>
            <person name="Vysotskaia V.S."/>
            <person name="Walker M."/>
            <person name="Wu D."/>
            <person name="Yu G."/>
            <person name="Fraser C.M."/>
            <person name="Venter J.C."/>
            <person name="Davis R.W."/>
        </authorList>
    </citation>
    <scope>NUCLEOTIDE SEQUENCE [LARGE SCALE GENOMIC DNA]</scope>
    <source>
        <strain>cv. Columbia</strain>
    </source>
</reference>
<reference key="3">
    <citation type="journal article" date="2017" name="Plant J.">
        <title>Araport11: a complete reannotation of the Arabidopsis thaliana reference genome.</title>
        <authorList>
            <person name="Cheng C.Y."/>
            <person name="Krishnakumar V."/>
            <person name="Chan A.P."/>
            <person name="Thibaud-Nissen F."/>
            <person name="Schobel S."/>
            <person name="Town C.D."/>
        </authorList>
    </citation>
    <scope>GENOME REANNOTATION</scope>
    <source>
        <strain>cv. Columbia</strain>
    </source>
</reference>
<reference key="4">
    <citation type="journal article" date="2009" name="Biochem. J.">
        <title>The NRAMP6 metal transporter contributes to cadmium toxicity.</title>
        <authorList>
            <person name="Cailliatte R."/>
            <person name="Lapeyre B."/>
            <person name="Briat J.F."/>
            <person name="Mari S."/>
            <person name="Curie C."/>
        </authorList>
    </citation>
    <scope>FUNCTION</scope>
    <scope>SUBCELLULAR LOCATION</scope>
    <scope>TISSUE SPECIFICITY</scope>
    <scope>DISRUPTION PHENOTYPE</scope>
</reference>
<sequence>MAAETASGSNRSISNSPLIENSDSNQILVPEKKSWKNFFSYLGPGFLVSIAYIDPGNFETDLQSGAQYKYELLWIILVASCAALVIQSLAANLGVVTGKHLAEHCRAEYSKVPNFMLWVVAEIAVVACDIPEVIGTAFALNMLFNIPVWIGVLLTGLSTLILLALQQYGIRKLEFLIAFLVFTIALCFFVELHYSKPDPKEVLYGLFVPQLKGNGATGLAISLLGAMVMPHNLFLHSALVLSRKIPRSVTGIKEACRYYLIESGLALMVAFLINVSVISVSGAVCNASDLSPEDRASCQDLDLNKASFLLRNVVGKWSSKLFAIALLASGQSSTITGTYAGQYVMQGFLDLRLEPWLRNFLTRCLAIIPSLIVALIGGSAGAGKLIIIASMILSFELPFALVPLLKFTSSKTKMGSHANSLVISSVTWIIGGLIMGINIYYLVSSFIKLLLHSHMNLVAIVFLGVLGFSGIATYLAAISYLVLRKNRESSSTHFLDFSNSQTEETLPREDIANMQLPNRVAVIGDLN</sequence>
<organism>
    <name type="scientific">Arabidopsis thaliana</name>
    <name type="common">Mouse-ear cress</name>
    <dbReference type="NCBI Taxonomy" id="3702"/>
    <lineage>
        <taxon>Eukaryota</taxon>
        <taxon>Viridiplantae</taxon>
        <taxon>Streptophyta</taxon>
        <taxon>Embryophyta</taxon>
        <taxon>Tracheophyta</taxon>
        <taxon>Spermatophyta</taxon>
        <taxon>Magnoliopsida</taxon>
        <taxon>eudicotyledons</taxon>
        <taxon>Gunneridae</taxon>
        <taxon>Pentapetalae</taxon>
        <taxon>rosids</taxon>
        <taxon>malvids</taxon>
        <taxon>Brassicales</taxon>
        <taxon>Brassicaceae</taxon>
        <taxon>Camelineae</taxon>
        <taxon>Arabidopsis</taxon>
    </lineage>
</organism>
<keyword id="KW-0025">Alternative splicing</keyword>
<keyword id="KW-0406">Ion transport</keyword>
<keyword id="KW-0408">Iron</keyword>
<keyword id="KW-0410">Iron transport</keyword>
<keyword id="KW-0472">Membrane</keyword>
<keyword id="KW-1185">Reference proteome</keyword>
<keyword id="KW-0812">Transmembrane</keyword>
<keyword id="KW-1133">Transmembrane helix</keyword>
<keyword id="KW-0813">Transport</keyword>
<evidence type="ECO:0000255" key="1"/>
<evidence type="ECO:0000269" key="2">
    <source>
    </source>
</evidence>
<evidence type="ECO:0000303" key="3">
    <source ref="1"/>
</evidence>
<evidence type="ECO:0000305" key="4"/>
<evidence type="ECO:0000305" key="5">
    <source>
    </source>
</evidence>
<gene>
    <name type="primary">NRAMP6</name>
    <name type="ordered locus">At1g15960</name>
    <name type="ORF">T24D18.6</name>
</gene>
<proteinExistence type="evidence at transcript level"/>
<protein>
    <recommendedName>
        <fullName>Metal transporter Nramp6</fullName>
        <shortName>AtNramp6</shortName>
    </recommendedName>
</protein>
<dbReference type="EMBL" id="AJ291831">
    <property type="protein sequence ID" value="CAC28123.1"/>
    <property type="molecule type" value="mRNA"/>
</dbReference>
<dbReference type="EMBL" id="AY263397">
    <property type="protein sequence ID" value="AAP22982.1"/>
    <property type="molecule type" value="mRNA"/>
</dbReference>
<dbReference type="EMBL" id="AC010924">
    <property type="protein sequence ID" value="AAF18493.1"/>
    <property type="status" value="ALT_SEQ"/>
    <property type="molecule type" value="Genomic_DNA"/>
</dbReference>
<dbReference type="EMBL" id="CP002684">
    <property type="protein sequence ID" value="AEE29390.1"/>
    <property type="molecule type" value="Genomic_DNA"/>
</dbReference>
<dbReference type="PIR" id="B86294">
    <property type="entry name" value="B86294"/>
</dbReference>
<dbReference type="RefSeq" id="NP_173048.3">
    <molecule id="Q9S9N8-1"/>
    <property type="nucleotide sequence ID" value="NM_101464.4"/>
</dbReference>
<dbReference type="SMR" id="Q9S9N8"/>
<dbReference type="FunCoup" id="Q9S9N8">
    <property type="interactions" value="10"/>
</dbReference>
<dbReference type="STRING" id="3702.Q9S9N8"/>
<dbReference type="PaxDb" id="3702-AT1G15960.1"/>
<dbReference type="ProteomicsDB" id="239059">
    <molecule id="Q9S9N8-1"/>
</dbReference>
<dbReference type="EnsemblPlants" id="AT1G15960.1">
    <molecule id="Q9S9N8-1"/>
    <property type="protein sequence ID" value="AT1G15960.1"/>
    <property type="gene ID" value="AT1G15960"/>
</dbReference>
<dbReference type="GeneID" id="838166"/>
<dbReference type="Gramene" id="AT1G15960.1">
    <molecule id="Q9S9N8-1"/>
    <property type="protein sequence ID" value="AT1G15960.1"/>
    <property type="gene ID" value="AT1G15960"/>
</dbReference>
<dbReference type="KEGG" id="ath:AT1G15960"/>
<dbReference type="Araport" id="AT1G15960"/>
<dbReference type="TAIR" id="AT1G15960">
    <property type="gene designation" value="NRAMP6"/>
</dbReference>
<dbReference type="eggNOG" id="KOG1291">
    <property type="taxonomic scope" value="Eukaryota"/>
</dbReference>
<dbReference type="HOGENOM" id="CLU_020088_0_1_1"/>
<dbReference type="InParanoid" id="Q9S9N8"/>
<dbReference type="OMA" id="AQNCKKH"/>
<dbReference type="OrthoDB" id="409173at2759"/>
<dbReference type="PhylomeDB" id="Q9S9N8"/>
<dbReference type="PRO" id="PR:Q9S9N8"/>
<dbReference type="Proteomes" id="UP000006548">
    <property type="component" value="Chromosome 1"/>
</dbReference>
<dbReference type="ExpressionAtlas" id="Q9S9N8">
    <property type="expression patterns" value="baseline and differential"/>
</dbReference>
<dbReference type="GO" id="GO:0012505">
    <property type="term" value="C:endomembrane system"/>
    <property type="evidence" value="ECO:0007669"/>
    <property type="project" value="UniProtKB-SubCell"/>
</dbReference>
<dbReference type="GO" id="GO:0016020">
    <property type="term" value="C:membrane"/>
    <property type="evidence" value="ECO:0007669"/>
    <property type="project" value="UniProtKB-KW"/>
</dbReference>
<dbReference type="GO" id="GO:0015086">
    <property type="term" value="F:cadmium ion transmembrane transporter activity"/>
    <property type="evidence" value="ECO:0000314"/>
    <property type="project" value="UniProtKB"/>
</dbReference>
<dbReference type="GO" id="GO:0070574">
    <property type="term" value="P:cadmium ion transmembrane transport"/>
    <property type="evidence" value="ECO:0000314"/>
    <property type="project" value="UniProtKB"/>
</dbReference>
<dbReference type="GO" id="GO:0006826">
    <property type="term" value="P:iron ion transport"/>
    <property type="evidence" value="ECO:0007669"/>
    <property type="project" value="UniProtKB-KW"/>
</dbReference>
<dbReference type="HAMAP" id="MF_00221">
    <property type="entry name" value="NRAMP"/>
    <property type="match status" value="1"/>
</dbReference>
<dbReference type="InterPro" id="IPR001046">
    <property type="entry name" value="NRAMP_fam"/>
</dbReference>
<dbReference type="NCBIfam" id="TIGR01197">
    <property type="entry name" value="nramp"/>
    <property type="match status" value="1"/>
</dbReference>
<dbReference type="NCBIfam" id="NF037982">
    <property type="entry name" value="Nramp_1"/>
    <property type="match status" value="1"/>
</dbReference>
<dbReference type="NCBIfam" id="NF001923">
    <property type="entry name" value="PRK00701.1"/>
    <property type="match status" value="1"/>
</dbReference>
<dbReference type="PANTHER" id="PTHR11706:SF108">
    <property type="entry name" value="METAL TRANSPORTER NRAMP6"/>
    <property type="match status" value="1"/>
</dbReference>
<dbReference type="PANTHER" id="PTHR11706">
    <property type="entry name" value="SOLUTE CARRIER PROTEIN FAMILY 11 MEMBER"/>
    <property type="match status" value="1"/>
</dbReference>
<dbReference type="Pfam" id="PF01566">
    <property type="entry name" value="Nramp"/>
    <property type="match status" value="1"/>
</dbReference>
<dbReference type="PRINTS" id="PR00447">
    <property type="entry name" value="NATRESASSCMP"/>
</dbReference>